<name>VKT2_DABRR</name>
<dbReference type="EMBL" id="DQ365979">
    <property type="protein sequence ID" value="ABD24041.1"/>
    <property type="molecule type" value="mRNA"/>
</dbReference>
<dbReference type="SMR" id="Q2ES49"/>
<dbReference type="GO" id="GO:0005615">
    <property type="term" value="C:extracellular space"/>
    <property type="evidence" value="ECO:0007669"/>
    <property type="project" value="TreeGrafter"/>
</dbReference>
<dbReference type="GO" id="GO:0004867">
    <property type="term" value="F:serine-type endopeptidase inhibitor activity"/>
    <property type="evidence" value="ECO:0007669"/>
    <property type="project" value="UniProtKB-KW"/>
</dbReference>
<dbReference type="Gene3D" id="4.10.410.10">
    <property type="entry name" value="Pancreatic trypsin inhibitor Kunitz domain"/>
    <property type="match status" value="1"/>
</dbReference>
<dbReference type="InterPro" id="IPR002223">
    <property type="entry name" value="Kunitz_BPTI"/>
</dbReference>
<dbReference type="InterPro" id="IPR036880">
    <property type="entry name" value="Kunitz_BPTI_sf"/>
</dbReference>
<dbReference type="InterPro" id="IPR050098">
    <property type="entry name" value="TFPI/VKTCI-like"/>
</dbReference>
<dbReference type="PANTHER" id="PTHR10083:SF374">
    <property type="entry name" value="BPTI_KUNITZ INHIBITOR DOMAIN-CONTAINING PROTEIN"/>
    <property type="match status" value="1"/>
</dbReference>
<dbReference type="PANTHER" id="PTHR10083">
    <property type="entry name" value="KUNITZ-TYPE PROTEASE INHIBITOR-RELATED"/>
    <property type="match status" value="1"/>
</dbReference>
<dbReference type="Pfam" id="PF00014">
    <property type="entry name" value="Kunitz_BPTI"/>
    <property type="match status" value="1"/>
</dbReference>
<dbReference type="SMART" id="SM00131">
    <property type="entry name" value="KU"/>
    <property type="match status" value="1"/>
</dbReference>
<dbReference type="SUPFAM" id="SSF57362">
    <property type="entry name" value="BPTI-like"/>
    <property type="match status" value="1"/>
</dbReference>
<dbReference type="PROSITE" id="PS50279">
    <property type="entry name" value="BPTI_KUNITZ_2"/>
    <property type="match status" value="1"/>
</dbReference>
<evidence type="ECO:0000250" key="1"/>
<evidence type="ECO:0000255" key="2">
    <source>
        <dbReference type="PROSITE-ProRule" id="PRU00031"/>
    </source>
</evidence>
<evidence type="ECO:0000305" key="3"/>
<proteinExistence type="evidence at transcript level"/>
<accession>Q2ES49</accession>
<comment type="function">
    <text evidence="1">Serine protease inhibitor.</text>
</comment>
<comment type="subcellular location">
    <subcellularLocation>
        <location evidence="1">Secreted</location>
    </subcellularLocation>
</comment>
<comment type="tissue specificity">
    <text>Expressed by the venom gland.</text>
</comment>
<comment type="similarity">
    <text evidence="3">Belongs to the venom Kunitz-type family.</text>
</comment>
<protein>
    <recommendedName>
        <fullName>Kunitz-type serine protease inhibitor 2</fullName>
    </recommendedName>
    <alternativeName>
        <fullName>Kunitz protease inhibitor 2</fullName>
    </alternativeName>
    <alternativeName>
        <fullName>Kunitz protease inhibitor II</fullName>
    </alternativeName>
</protein>
<keyword id="KW-1015">Disulfide bond</keyword>
<keyword id="KW-0646">Protease inhibitor</keyword>
<keyword id="KW-0873">Pyrrolidone carboxylic acid</keyword>
<keyword id="KW-0964">Secreted</keyword>
<keyword id="KW-0722">Serine protease inhibitor</keyword>
<keyword id="KW-0732">Signal</keyword>
<feature type="signal peptide" evidence="1">
    <location>
        <begin position="1"/>
        <end position="24"/>
    </location>
</feature>
<feature type="chain" id="PRO_0000377463" description="Kunitz-type serine protease inhibitor 2">
    <location>
        <begin position="25"/>
        <end position="84"/>
    </location>
</feature>
<feature type="domain" description="BPTI/Kunitz inhibitor" evidence="2">
    <location>
        <begin position="31"/>
        <end position="81"/>
    </location>
</feature>
<feature type="modified residue" description="Pyrrolidone carboxylic acid" evidence="1">
    <location>
        <position position="25"/>
    </location>
</feature>
<feature type="disulfide bond" evidence="2">
    <location>
        <begin position="31"/>
        <end position="81"/>
    </location>
</feature>
<feature type="disulfide bond" evidence="2">
    <location>
        <begin position="56"/>
        <end position="77"/>
    </location>
</feature>
<organism>
    <name type="scientific">Daboia russelii</name>
    <name type="common">Russel's viper</name>
    <name type="synonym">Vipera russelii</name>
    <dbReference type="NCBI Taxonomy" id="8707"/>
    <lineage>
        <taxon>Eukaryota</taxon>
        <taxon>Metazoa</taxon>
        <taxon>Chordata</taxon>
        <taxon>Craniata</taxon>
        <taxon>Vertebrata</taxon>
        <taxon>Euteleostomi</taxon>
        <taxon>Lepidosauria</taxon>
        <taxon>Squamata</taxon>
        <taxon>Bifurcata</taxon>
        <taxon>Unidentata</taxon>
        <taxon>Episquamata</taxon>
        <taxon>Toxicofera</taxon>
        <taxon>Serpentes</taxon>
        <taxon>Colubroidea</taxon>
        <taxon>Viperidae</taxon>
        <taxon>Viperinae</taxon>
        <taxon>Daboia</taxon>
    </lineage>
</organism>
<reference key="1">
    <citation type="submission" date="2006-01" db="EMBL/GenBank/DDBJ databases">
        <title>A survey of Daboia russelii venom gland transcripts (cDNA): unraveling the venom proteins and peptides.</title>
        <authorList>
            <person name="Madhukumar A.V."/>
            <person name="Reza M.A."/>
            <person name="Gowda T.V."/>
            <person name="Kini R.M."/>
        </authorList>
    </citation>
    <scope>NUCLEOTIDE SEQUENCE [MRNA]</scope>
    <source>
        <tissue>Venom gland</tissue>
    </source>
</reference>
<sequence>MSSGGLLLLLGLLTLWAEPTPISGQDRPKFCFLRPDFGRYGHPRPRFYYNPATNQCQGFLAQRSRENTNNFDTRDKCRQTCGRK</sequence>